<evidence type="ECO:0000255" key="1">
    <source>
        <dbReference type="HAMAP-Rule" id="MF_01400"/>
    </source>
</evidence>
<evidence type="ECO:0000255" key="2">
    <source>
        <dbReference type="PROSITE-ProRule" id="PRU01126"/>
    </source>
</evidence>
<dbReference type="EC" id="1.8.4.12" evidence="1"/>
<dbReference type="EMBL" id="AM263198">
    <property type="protein sequence ID" value="CAK21296.1"/>
    <property type="molecule type" value="Genomic_DNA"/>
</dbReference>
<dbReference type="RefSeq" id="WP_011702645.1">
    <property type="nucleotide sequence ID" value="NC_008555.1"/>
</dbReference>
<dbReference type="SMR" id="A0AJW4"/>
<dbReference type="STRING" id="386043.lwe1878"/>
<dbReference type="GeneID" id="61189779"/>
<dbReference type="KEGG" id="lwe:lwe1878"/>
<dbReference type="eggNOG" id="COG0229">
    <property type="taxonomic scope" value="Bacteria"/>
</dbReference>
<dbReference type="HOGENOM" id="CLU_031040_8_5_9"/>
<dbReference type="OrthoDB" id="4174719at2"/>
<dbReference type="Proteomes" id="UP000000779">
    <property type="component" value="Chromosome"/>
</dbReference>
<dbReference type="GO" id="GO:0005737">
    <property type="term" value="C:cytoplasm"/>
    <property type="evidence" value="ECO:0007669"/>
    <property type="project" value="TreeGrafter"/>
</dbReference>
<dbReference type="GO" id="GO:0033743">
    <property type="term" value="F:peptide-methionine (R)-S-oxide reductase activity"/>
    <property type="evidence" value="ECO:0007669"/>
    <property type="project" value="UniProtKB-UniRule"/>
</dbReference>
<dbReference type="GO" id="GO:0030091">
    <property type="term" value="P:protein repair"/>
    <property type="evidence" value="ECO:0007669"/>
    <property type="project" value="InterPro"/>
</dbReference>
<dbReference type="GO" id="GO:0006979">
    <property type="term" value="P:response to oxidative stress"/>
    <property type="evidence" value="ECO:0007669"/>
    <property type="project" value="InterPro"/>
</dbReference>
<dbReference type="FunFam" id="2.170.150.20:FF:000003">
    <property type="entry name" value="Peptide methionine sulfoxide reductase MsrB"/>
    <property type="match status" value="1"/>
</dbReference>
<dbReference type="Gene3D" id="2.170.150.20">
    <property type="entry name" value="Peptide methionine sulfoxide reductase"/>
    <property type="match status" value="1"/>
</dbReference>
<dbReference type="HAMAP" id="MF_01400">
    <property type="entry name" value="MsrB"/>
    <property type="match status" value="1"/>
</dbReference>
<dbReference type="InterPro" id="IPR028427">
    <property type="entry name" value="Met_Sox_Rdtase_MsrB"/>
</dbReference>
<dbReference type="InterPro" id="IPR002579">
    <property type="entry name" value="Met_Sox_Rdtase_MsrB_dom"/>
</dbReference>
<dbReference type="InterPro" id="IPR011057">
    <property type="entry name" value="Mss4-like_sf"/>
</dbReference>
<dbReference type="NCBIfam" id="TIGR00357">
    <property type="entry name" value="peptide-methionine (R)-S-oxide reductase MsrB"/>
    <property type="match status" value="1"/>
</dbReference>
<dbReference type="PANTHER" id="PTHR10173">
    <property type="entry name" value="METHIONINE SULFOXIDE REDUCTASE"/>
    <property type="match status" value="1"/>
</dbReference>
<dbReference type="PANTHER" id="PTHR10173:SF59">
    <property type="entry name" value="PEPTIDE METHIONINE SULFOXIDE REDUCTASE MSRA_MSRB"/>
    <property type="match status" value="1"/>
</dbReference>
<dbReference type="Pfam" id="PF01641">
    <property type="entry name" value="SelR"/>
    <property type="match status" value="1"/>
</dbReference>
<dbReference type="SUPFAM" id="SSF51316">
    <property type="entry name" value="Mss4-like"/>
    <property type="match status" value="1"/>
</dbReference>
<dbReference type="PROSITE" id="PS51790">
    <property type="entry name" value="MSRB"/>
    <property type="match status" value="1"/>
</dbReference>
<accession>A0AJW4</accession>
<sequence>MDESKKNERLKQLTDIQYNVTQKAGTERPFQNEFYDNAAKGIYVDIVSGKPLFSSTDQYDAGCGWPSFTKPIDEAEVKEHKDRTHGMIRTEVKSVDADSHLGHVFPDGPQDKGGLRYCINSAALRFIPVDKLDDEGYQAYKKIFE</sequence>
<proteinExistence type="inferred from homology"/>
<organism>
    <name type="scientific">Listeria welshimeri serovar 6b (strain ATCC 35897 / DSM 20650 / CCUG 15529 / CIP 8149 / NCTC 11857 / SLCC 5334 / V8)</name>
    <dbReference type="NCBI Taxonomy" id="386043"/>
    <lineage>
        <taxon>Bacteria</taxon>
        <taxon>Bacillati</taxon>
        <taxon>Bacillota</taxon>
        <taxon>Bacilli</taxon>
        <taxon>Bacillales</taxon>
        <taxon>Listeriaceae</taxon>
        <taxon>Listeria</taxon>
    </lineage>
</organism>
<name>MSRB_LISW6</name>
<gene>
    <name evidence="1" type="primary">msrB</name>
    <name type="ordered locus">lwe1878</name>
</gene>
<comment type="catalytic activity">
    <reaction evidence="1">
        <text>L-methionyl-[protein] + [thioredoxin]-disulfide + H2O = L-methionyl-(R)-S-oxide-[protein] + [thioredoxin]-dithiol</text>
        <dbReference type="Rhea" id="RHEA:24164"/>
        <dbReference type="Rhea" id="RHEA-COMP:10698"/>
        <dbReference type="Rhea" id="RHEA-COMP:10700"/>
        <dbReference type="Rhea" id="RHEA-COMP:12313"/>
        <dbReference type="Rhea" id="RHEA-COMP:12314"/>
        <dbReference type="ChEBI" id="CHEBI:15377"/>
        <dbReference type="ChEBI" id="CHEBI:16044"/>
        <dbReference type="ChEBI" id="CHEBI:29950"/>
        <dbReference type="ChEBI" id="CHEBI:45764"/>
        <dbReference type="ChEBI" id="CHEBI:50058"/>
        <dbReference type="EC" id="1.8.4.12"/>
    </reaction>
</comment>
<comment type="similarity">
    <text evidence="1">Belongs to the MsrB Met sulfoxide reductase family.</text>
</comment>
<keyword id="KW-0560">Oxidoreductase</keyword>
<reference key="1">
    <citation type="journal article" date="2006" name="J. Bacteriol.">
        <title>Whole-genome sequence of Listeria welshimeri reveals common steps in genome reduction with Listeria innocua as compared to Listeria monocytogenes.</title>
        <authorList>
            <person name="Hain T."/>
            <person name="Steinweg C."/>
            <person name="Kuenne C.T."/>
            <person name="Billion A."/>
            <person name="Ghai R."/>
            <person name="Chatterjee S.S."/>
            <person name="Domann E."/>
            <person name="Kaerst U."/>
            <person name="Goesmann A."/>
            <person name="Bekel T."/>
            <person name="Bartels D."/>
            <person name="Kaiser O."/>
            <person name="Meyer F."/>
            <person name="Puehler A."/>
            <person name="Weisshaar B."/>
            <person name="Wehland J."/>
            <person name="Liang C."/>
            <person name="Dandekar T."/>
            <person name="Lampidis R."/>
            <person name="Kreft J."/>
            <person name="Goebel W."/>
            <person name="Chakraborty T."/>
        </authorList>
    </citation>
    <scope>NUCLEOTIDE SEQUENCE [LARGE SCALE GENOMIC DNA]</scope>
    <source>
        <strain>ATCC 35897 / DSM 20650 / CCUG 15529 / CIP 8149 / NCTC 11857 / SLCC 5334 / V8</strain>
    </source>
</reference>
<feature type="chain" id="PRO_1000068277" description="Peptide methionine sulfoxide reductase MsrB">
    <location>
        <begin position="1"/>
        <end position="145"/>
    </location>
</feature>
<feature type="domain" description="MsrB" evidence="2">
    <location>
        <begin position="6"/>
        <end position="129"/>
    </location>
</feature>
<feature type="active site" description="Nucleophile" evidence="2">
    <location>
        <position position="118"/>
    </location>
</feature>
<protein>
    <recommendedName>
        <fullName evidence="1">Peptide methionine sulfoxide reductase MsrB</fullName>
        <ecNumber evidence="1">1.8.4.12</ecNumber>
    </recommendedName>
    <alternativeName>
        <fullName evidence="1">Peptide-methionine (R)-S-oxide reductase</fullName>
    </alternativeName>
</protein>